<dbReference type="EMBL" id="HE600983">
    <property type="protein sequence ID" value="CAP32754.3"/>
    <property type="molecule type" value="Genomic_DNA"/>
</dbReference>
<dbReference type="SMR" id="Q619T5"/>
<dbReference type="FunCoup" id="Q619T5">
    <property type="interactions" value="27"/>
</dbReference>
<dbReference type="STRING" id="6238.Q619T5"/>
<dbReference type="EnsemblMetazoa" id="CBG14124a.1">
    <property type="protein sequence ID" value="CBG14124a.1"/>
    <property type="gene ID" value="WBGene00034723"/>
</dbReference>
<dbReference type="KEGG" id="cbr:CBG_14124"/>
<dbReference type="CTD" id="8586311"/>
<dbReference type="WormBase" id="CBG14124a">
    <property type="protein sequence ID" value="CBP22969"/>
    <property type="gene ID" value="WBGene00034723"/>
    <property type="gene designation" value="Cbr-rsef-1"/>
</dbReference>
<dbReference type="eggNOG" id="KOG0078">
    <property type="taxonomic scope" value="Eukaryota"/>
</dbReference>
<dbReference type="HOGENOM" id="CLU_023178_1_0_1"/>
<dbReference type="InParanoid" id="Q619T5"/>
<dbReference type="OMA" id="EHYHSES"/>
<dbReference type="Proteomes" id="UP000008549">
    <property type="component" value="Unassembled WGS sequence"/>
</dbReference>
<dbReference type="GO" id="GO:0048471">
    <property type="term" value="C:perinuclear region of cytoplasm"/>
    <property type="evidence" value="ECO:0007669"/>
    <property type="project" value="UniProtKB-SubCell"/>
</dbReference>
<dbReference type="GO" id="GO:0005509">
    <property type="term" value="F:calcium ion binding"/>
    <property type="evidence" value="ECO:0007669"/>
    <property type="project" value="InterPro"/>
</dbReference>
<dbReference type="GO" id="GO:0005525">
    <property type="term" value="F:GTP binding"/>
    <property type="evidence" value="ECO:0000318"/>
    <property type="project" value="GO_Central"/>
</dbReference>
<dbReference type="GO" id="GO:0003924">
    <property type="term" value="F:GTPase activity"/>
    <property type="evidence" value="ECO:0000318"/>
    <property type="project" value="GO_Central"/>
</dbReference>
<dbReference type="GO" id="GO:0016192">
    <property type="term" value="P:vesicle-mediated transport"/>
    <property type="evidence" value="ECO:0000318"/>
    <property type="project" value="GO_Central"/>
</dbReference>
<dbReference type="CDD" id="cd00051">
    <property type="entry name" value="EFh"/>
    <property type="match status" value="1"/>
</dbReference>
<dbReference type="CDD" id="cd00154">
    <property type="entry name" value="Rab"/>
    <property type="match status" value="1"/>
</dbReference>
<dbReference type="FunFam" id="1.10.238.10:FF:000551">
    <property type="entry name" value="Mutated in colorectal cancer isoform 1"/>
    <property type="match status" value="1"/>
</dbReference>
<dbReference type="FunFam" id="3.40.50.300:FF:001348">
    <property type="entry name" value="Ras and EF-hand domain-containing protein"/>
    <property type="match status" value="1"/>
</dbReference>
<dbReference type="Gene3D" id="1.10.238.10">
    <property type="entry name" value="EF-hand"/>
    <property type="match status" value="1"/>
</dbReference>
<dbReference type="Gene3D" id="3.40.50.300">
    <property type="entry name" value="P-loop containing nucleotide triphosphate hydrolases"/>
    <property type="match status" value="1"/>
</dbReference>
<dbReference type="InterPro" id="IPR011992">
    <property type="entry name" value="EF-hand-dom_pair"/>
</dbReference>
<dbReference type="InterPro" id="IPR018247">
    <property type="entry name" value="EF_Hand_1_Ca_BS"/>
</dbReference>
<dbReference type="InterPro" id="IPR002048">
    <property type="entry name" value="EF_hand_dom"/>
</dbReference>
<dbReference type="InterPro" id="IPR027417">
    <property type="entry name" value="P-loop_NTPase"/>
</dbReference>
<dbReference type="InterPro" id="IPR050227">
    <property type="entry name" value="Rab"/>
</dbReference>
<dbReference type="InterPro" id="IPR005225">
    <property type="entry name" value="Small_GTP-bd"/>
</dbReference>
<dbReference type="InterPro" id="IPR001806">
    <property type="entry name" value="Small_GTPase"/>
</dbReference>
<dbReference type="NCBIfam" id="TIGR00231">
    <property type="entry name" value="small_GTP"/>
    <property type="match status" value="1"/>
</dbReference>
<dbReference type="PANTHER" id="PTHR47977">
    <property type="entry name" value="RAS-RELATED PROTEIN RAB"/>
    <property type="match status" value="1"/>
</dbReference>
<dbReference type="Pfam" id="PF13499">
    <property type="entry name" value="EF-hand_7"/>
    <property type="match status" value="1"/>
</dbReference>
<dbReference type="Pfam" id="PF00071">
    <property type="entry name" value="Ras"/>
    <property type="match status" value="1"/>
</dbReference>
<dbReference type="PRINTS" id="PR00449">
    <property type="entry name" value="RASTRNSFRMNG"/>
</dbReference>
<dbReference type="SMART" id="SM00177">
    <property type="entry name" value="ARF"/>
    <property type="match status" value="1"/>
</dbReference>
<dbReference type="SMART" id="SM00054">
    <property type="entry name" value="EFh"/>
    <property type="match status" value="2"/>
</dbReference>
<dbReference type="SMART" id="SM00175">
    <property type="entry name" value="RAB"/>
    <property type="match status" value="1"/>
</dbReference>
<dbReference type="SMART" id="SM00176">
    <property type="entry name" value="RAN"/>
    <property type="match status" value="1"/>
</dbReference>
<dbReference type="SMART" id="SM00173">
    <property type="entry name" value="RAS"/>
    <property type="match status" value="1"/>
</dbReference>
<dbReference type="SMART" id="SM00174">
    <property type="entry name" value="RHO"/>
    <property type="match status" value="1"/>
</dbReference>
<dbReference type="SUPFAM" id="SSF47473">
    <property type="entry name" value="EF-hand"/>
    <property type="match status" value="1"/>
</dbReference>
<dbReference type="SUPFAM" id="SSF52540">
    <property type="entry name" value="P-loop containing nucleoside triphosphate hydrolases"/>
    <property type="match status" value="1"/>
</dbReference>
<dbReference type="PROSITE" id="PS00018">
    <property type="entry name" value="EF_HAND_1"/>
    <property type="match status" value="1"/>
</dbReference>
<dbReference type="PROSITE" id="PS50222">
    <property type="entry name" value="EF_HAND_2"/>
    <property type="match status" value="1"/>
</dbReference>
<dbReference type="PROSITE" id="PS51419">
    <property type="entry name" value="RAB"/>
    <property type="match status" value="1"/>
</dbReference>
<evidence type="ECO:0000250" key="1">
    <source>
        <dbReference type="UniProtKB" id="Q22908"/>
    </source>
</evidence>
<evidence type="ECO:0000250" key="2">
    <source>
        <dbReference type="UniProtKB" id="Q8IZ41"/>
    </source>
</evidence>
<evidence type="ECO:0000255" key="3"/>
<evidence type="ECO:0000255" key="4">
    <source>
        <dbReference type="PROSITE-ProRule" id="PRU00448"/>
    </source>
</evidence>
<evidence type="ECO:0000256" key="5">
    <source>
        <dbReference type="SAM" id="MobiDB-lite"/>
    </source>
</evidence>
<evidence type="ECO:0000305" key="6"/>
<evidence type="ECO:0000312" key="7">
    <source>
        <dbReference type="WormBase" id="CBG14124a"/>
    </source>
</evidence>
<feature type="chain" id="PRO_0000299581" description="Ras and EF-hand domain-containing protein homolog">
    <location>
        <begin position="1"/>
        <end position="631"/>
    </location>
</feature>
<feature type="propeptide" id="PRO_0000370841" description="Removed in mature form" evidence="3">
    <location>
        <begin position="632"/>
        <end position="634"/>
    </location>
</feature>
<feature type="domain" description="EF-hand 1" evidence="6">
    <location>
        <begin position="5"/>
        <end position="33"/>
    </location>
</feature>
<feature type="domain" description="EF-hand 2" evidence="4">
    <location>
        <begin position="33"/>
        <end position="68"/>
    </location>
</feature>
<feature type="region of interest" description="Disordered" evidence="5">
    <location>
        <begin position="216"/>
        <end position="237"/>
    </location>
</feature>
<feature type="region of interest" description="Disordered" evidence="5">
    <location>
        <begin position="308"/>
        <end position="328"/>
    </location>
</feature>
<feature type="coiled-coil region" evidence="3">
    <location>
        <begin position="169"/>
        <end position="310"/>
    </location>
</feature>
<feature type="binding site" evidence="4">
    <location>
        <position position="46"/>
    </location>
    <ligand>
        <name>Ca(2+)</name>
        <dbReference type="ChEBI" id="CHEBI:29108"/>
    </ligand>
</feature>
<feature type="binding site" evidence="4">
    <location>
        <position position="48"/>
    </location>
    <ligand>
        <name>Ca(2+)</name>
        <dbReference type="ChEBI" id="CHEBI:29108"/>
    </ligand>
</feature>
<feature type="binding site" evidence="4">
    <location>
        <position position="50"/>
    </location>
    <ligand>
        <name>Ca(2+)</name>
        <dbReference type="ChEBI" id="CHEBI:29108"/>
    </ligand>
</feature>
<feature type="binding site" evidence="4">
    <location>
        <position position="52"/>
    </location>
    <ligand>
        <name>Ca(2+)</name>
        <dbReference type="ChEBI" id="CHEBI:29108"/>
    </ligand>
</feature>
<feature type="binding site" evidence="4">
    <location>
        <position position="57"/>
    </location>
    <ligand>
        <name>Ca(2+)</name>
        <dbReference type="ChEBI" id="CHEBI:29108"/>
    </ligand>
</feature>
<feature type="binding site" evidence="2">
    <location>
        <begin position="449"/>
        <end position="454"/>
    </location>
    <ligand>
        <name>GTP</name>
        <dbReference type="ChEBI" id="CHEBI:37565"/>
    </ligand>
</feature>
<feature type="binding site" evidence="2">
    <location>
        <begin position="552"/>
        <end position="555"/>
    </location>
    <ligand>
        <name>GTP</name>
        <dbReference type="ChEBI" id="CHEBI:37565"/>
    </ligand>
</feature>
<feature type="binding site" evidence="2">
    <location>
        <begin position="585"/>
        <end position="586"/>
    </location>
    <ligand>
        <name>GTP</name>
        <dbReference type="ChEBI" id="CHEBI:37565"/>
    </ligand>
</feature>
<name>RASEF_CAEBR</name>
<proteinExistence type="inferred from homology"/>
<accession>Q619T5</accession>
<accession>A8XJC9</accession>
<comment type="function">
    <text evidence="1 2">Binds GTP and GDP. Plays a role in uterine seam cell development.</text>
</comment>
<comment type="subunit">
    <text evidence="2">Homodimer.</text>
</comment>
<comment type="subcellular location">
    <subcellularLocation>
        <location evidence="2">Cytoplasm</location>
        <location evidence="2">Perinuclear region</location>
    </subcellularLocation>
</comment>
<comment type="similarity">
    <text evidence="6">Belongs to the small GTPase superfamily. Rab family.</text>
</comment>
<protein>
    <recommendedName>
        <fullName>Ras and EF-hand domain-containing protein homolog</fullName>
    </recommendedName>
</protein>
<keyword id="KW-0106">Calcium</keyword>
<keyword id="KW-0175">Coiled coil</keyword>
<keyword id="KW-0963">Cytoplasm</keyword>
<keyword id="KW-0342">GTP-binding</keyword>
<keyword id="KW-0479">Metal-binding</keyword>
<keyword id="KW-0547">Nucleotide-binding</keyword>
<keyword id="KW-1185">Reference proteome</keyword>
<keyword id="KW-0677">Repeat</keyword>
<sequence length="634" mass="72268">MANPDVENLFSLCDSESKGFLTMEDLKKVCPQLDDNDLRFIFNELDRDGSGKIEKMEFLQGFQETVQHGESRGLNGMQRRASVAFDDGGPVFRRDELVFESESDSSSRPAIRVYDEEHYHSESDTNINIDFSVPCQEEVLVLYEQLQSSGVPALLRKFERVVGSFHKELSEKKHENERLQRIYASEREMYNRRMEEMESEVDQQLELIEMKARQEERERLTKEKEEMRERMSEEMSEMRTNIERLQRMEKVLERENERLNHQKDLSDKLKVVNEENNDLRQNLAENHLELAMIKSELAQVRADFDQKQDELSARRDQASHATEESESVRKQLQLLFDANRKLHETNESLRDALDSRASVLRQFNLRTPSPGLINSNRNSVENFQTSTNMFKSVPLHAISDEEPDPETSLILDDAHSLQGMDIAEGLVGLNDANGPAERTFRIVMCGDAAVGKSSFVMRVIRRQFTNQLPSTLGVDFHVKTVNVDGRNVALQLWDTAGQERFRSLCKSYFRRADGAILVYDVCAEHSFLRVRDWIETIKESTERSIPIILVGNKVDMRLQTPGAVAKTDGASMAAAMGVLFMETSALDGSNIDNAMLALTRELMAVEDVEIRSTGVVLNPAATKKGGCFSKCRGS</sequence>
<gene>
    <name evidence="7" type="primary">rsef-1</name>
    <name evidence="7" type="synonym">tag-312</name>
    <name evidence="7" type="ORF">CBG14124</name>
</gene>
<organism>
    <name type="scientific">Caenorhabditis briggsae</name>
    <dbReference type="NCBI Taxonomy" id="6238"/>
    <lineage>
        <taxon>Eukaryota</taxon>
        <taxon>Metazoa</taxon>
        <taxon>Ecdysozoa</taxon>
        <taxon>Nematoda</taxon>
        <taxon>Chromadorea</taxon>
        <taxon>Rhabditida</taxon>
        <taxon>Rhabditina</taxon>
        <taxon>Rhabditomorpha</taxon>
        <taxon>Rhabditoidea</taxon>
        <taxon>Rhabditidae</taxon>
        <taxon>Peloderinae</taxon>
        <taxon>Caenorhabditis</taxon>
    </lineage>
</organism>
<reference key="1">
    <citation type="journal article" date="2003" name="PLoS Biol.">
        <title>The genome sequence of Caenorhabditis briggsae: a platform for comparative genomics.</title>
        <authorList>
            <person name="Stein L.D."/>
            <person name="Bao Z."/>
            <person name="Blasiar D."/>
            <person name="Blumenthal T."/>
            <person name="Brent M.R."/>
            <person name="Chen N."/>
            <person name="Chinwalla A."/>
            <person name="Clarke L."/>
            <person name="Clee C."/>
            <person name="Coghlan A."/>
            <person name="Coulson A."/>
            <person name="D'Eustachio P."/>
            <person name="Fitch D.H.A."/>
            <person name="Fulton L.A."/>
            <person name="Fulton R.E."/>
            <person name="Griffiths-Jones S."/>
            <person name="Harris T.W."/>
            <person name="Hillier L.W."/>
            <person name="Kamath R."/>
            <person name="Kuwabara P.E."/>
            <person name="Mardis E.R."/>
            <person name="Marra M.A."/>
            <person name="Miner T.L."/>
            <person name="Minx P."/>
            <person name="Mullikin J.C."/>
            <person name="Plumb R.W."/>
            <person name="Rogers J."/>
            <person name="Schein J.E."/>
            <person name="Sohrmann M."/>
            <person name="Spieth J."/>
            <person name="Stajich J.E."/>
            <person name="Wei C."/>
            <person name="Willey D."/>
            <person name="Wilson R.K."/>
            <person name="Durbin R.M."/>
            <person name="Waterston R.H."/>
        </authorList>
    </citation>
    <scope>NUCLEOTIDE SEQUENCE [LARGE SCALE GENOMIC DNA]</scope>
    <source>
        <strain>AF16</strain>
    </source>
</reference>